<gene>
    <name evidence="1" type="primary">tgtA</name>
    <name type="ordered locus">Saci_0659</name>
</gene>
<keyword id="KW-0328">Glycosyltransferase</keyword>
<keyword id="KW-0479">Metal-binding</keyword>
<keyword id="KW-1185">Reference proteome</keyword>
<keyword id="KW-0808">Transferase</keyword>
<keyword id="KW-0819">tRNA processing</keyword>
<keyword id="KW-0862">Zinc</keyword>
<feature type="chain" id="PRO_0000247884" description="tRNA-guanine(15) transglycosylase">
    <location>
        <begin position="1"/>
        <end position="498"/>
    </location>
</feature>
<feature type="active site" description="Nucleophile" evidence="1">
    <location>
        <position position="85"/>
    </location>
</feature>
<feature type="binding site" evidence="1">
    <location>
        <position position="120"/>
    </location>
    <ligand>
        <name>substrate</name>
    </ligand>
</feature>
<feature type="binding site" evidence="1">
    <location>
        <position position="275"/>
    </location>
    <ligand>
        <name>Zn(2+)</name>
        <dbReference type="ChEBI" id="CHEBI:29105"/>
    </ligand>
</feature>
<feature type="binding site" evidence="1">
    <location>
        <position position="277"/>
    </location>
    <ligand>
        <name>Zn(2+)</name>
        <dbReference type="ChEBI" id="CHEBI:29105"/>
    </ligand>
</feature>
<feature type="binding site" evidence="1">
    <location>
        <position position="280"/>
    </location>
    <ligand>
        <name>Zn(2+)</name>
        <dbReference type="ChEBI" id="CHEBI:29105"/>
    </ligand>
</feature>
<reference key="1">
    <citation type="journal article" date="2005" name="J. Bacteriol.">
        <title>The genome of Sulfolobus acidocaldarius, a model organism of the Crenarchaeota.</title>
        <authorList>
            <person name="Chen L."/>
            <person name="Bruegger K."/>
            <person name="Skovgaard M."/>
            <person name="Redder P."/>
            <person name="She Q."/>
            <person name="Torarinsson E."/>
            <person name="Greve B."/>
            <person name="Awayez M."/>
            <person name="Zibat A."/>
            <person name="Klenk H.-P."/>
            <person name="Garrett R.A."/>
        </authorList>
    </citation>
    <scope>NUCLEOTIDE SEQUENCE [LARGE SCALE GENOMIC DNA]</scope>
    <source>
        <strain>ATCC 33909 / DSM 639 / JCM 8929 / NBRC 15157 / NCIMB 11770</strain>
    </source>
</reference>
<organism>
    <name type="scientific">Sulfolobus acidocaldarius (strain ATCC 33909 / DSM 639 / JCM 8929 / NBRC 15157 / NCIMB 11770)</name>
    <dbReference type="NCBI Taxonomy" id="330779"/>
    <lineage>
        <taxon>Archaea</taxon>
        <taxon>Thermoproteota</taxon>
        <taxon>Thermoprotei</taxon>
        <taxon>Sulfolobales</taxon>
        <taxon>Sulfolobaceae</taxon>
        <taxon>Sulfolobus</taxon>
    </lineage>
</organism>
<proteinExistence type="inferred from homology"/>
<protein>
    <recommendedName>
        <fullName evidence="1">tRNA-guanine(15) transglycosylase</fullName>
        <ecNumber evidence="1">2.4.2.48</ecNumber>
    </recommendedName>
    <alternativeName>
        <fullName evidence="1">7-cyano-7-deazaguanine tRNA-ribosyltransferase</fullName>
    </alternativeName>
    <alternativeName>
        <fullName evidence="1">Archaeal tRNA-guanine transglycosylase</fullName>
    </alternativeName>
</protein>
<comment type="function">
    <text evidence="1">Exchanges the guanine residue with 7-cyano-7-deazaguanine (preQ0) at position 15 in the dihydrouridine loop (D-loop) of archaeal tRNAs.</text>
</comment>
<comment type="catalytic activity">
    <reaction evidence="1">
        <text>guanosine(15) in tRNA + 7-cyano-7-deazaguanine = 7-cyano-7-carbaguanosine(15) in tRNA + guanine</text>
        <dbReference type="Rhea" id="RHEA:43164"/>
        <dbReference type="Rhea" id="RHEA-COMP:10371"/>
        <dbReference type="Rhea" id="RHEA-COMP:10372"/>
        <dbReference type="ChEBI" id="CHEBI:16235"/>
        <dbReference type="ChEBI" id="CHEBI:45075"/>
        <dbReference type="ChEBI" id="CHEBI:74269"/>
        <dbReference type="ChEBI" id="CHEBI:82850"/>
        <dbReference type="EC" id="2.4.2.48"/>
    </reaction>
</comment>
<comment type="cofactor">
    <cofactor evidence="1">
        <name>Zn(2+)</name>
        <dbReference type="ChEBI" id="CHEBI:29105"/>
    </cofactor>
    <text evidence="1">Binds 1 zinc ion per subunit.</text>
</comment>
<comment type="pathway">
    <text evidence="1">tRNA modification; archaeosine-tRNA biosynthesis.</text>
</comment>
<comment type="similarity">
    <text evidence="1">Belongs to the archaeosine tRNA-ribosyltransferase family.</text>
</comment>
<dbReference type="EC" id="2.4.2.48" evidence="1"/>
<dbReference type="EMBL" id="CP000077">
    <property type="protein sequence ID" value="AAY80043.1"/>
    <property type="molecule type" value="Genomic_DNA"/>
</dbReference>
<dbReference type="SMR" id="Q4JAY6"/>
<dbReference type="STRING" id="330779.Saci_0659"/>
<dbReference type="KEGG" id="sai:Saci_0659"/>
<dbReference type="eggNOG" id="arCOG00989">
    <property type="taxonomic scope" value="Archaea"/>
</dbReference>
<dbReference type="HOGENOM" id="CLU_030083_0_0_2"/>
<dbReference type="UniPathway" id="UPA00393"/>
<dbReference type="Proteomes" id="UP000001018">
    <property type="component" value="Chromosome"/>
</dbReference>
<dbReference type="GO" id="GO:0005737">
    <property type="term" value="C:cytoplasm"/>
    <property type="evidence" value="ECO:0007669"/>
    <property type="project" value="TreeGrafter"/>
</dbReference>
<dbReference type="GO" id="GO:0016763">
    <property type="term" value="F:pentosyltransferase activity"/>
    <property type="evidence" value="ECO:0007669"/>
    <property type="project" value="UniProtKB-UniRule"/>
</dbReference>
<dbReference type="GO" id="GO:0008270">
    <property type="term" value="F:zinc ion binding"/>
    <property type="evidence" value="ECO:0007669"/>
    <property type="project" value="UniProtKB-UniRule"/>
</dbReference>
<dbReference type="GO" id="GO:0002099">
    <property type="term" value="P:tRNA wobble guanine modification"/>
    <property type="evidence" value="ECO:0007669"/>
    <property type="project" value="TreeGrafter"/>
</dbReference>
<dbReference type="Gene3D" id="3.20.20.105">
    <property type="entry name" value="Queuine tRNA-ribosyltransferase-like"/>
    <property type="match status" value="1"/>
</dbReference>
<dbReference type="HAMAP" id="MF_01634">
    <property type="entry name" value="TgtA_arch"/>
    <property type="match status" value="1"/>
</dbReference>
<dbReference type="InterPro" id="IPR050076">
    <property type="entry name" value="ArchSynthase1/Queuine_TRR"/>
</dbReference>
<dbReference type="InterPro" id="IPR036511">
    <property type="entry name" value="TGT-like_sf"/>
</dbReference>
<dbReference type="InterPro" id="IPR004804">
    <property type="entry name" value="TgtA"/>
</dbReference>
<dbReference type="InterPro" id="IPR002616">
    <property type="entry name" value="tRNA_ribo_trans-like"/>
</dbReference>
<dbReference type="NCBIfam" id="TIGR00432">
    <property type="entry name" value="arcsn_tRNA_tgt"/>
    <property type="match status" value="1"/>
</dbReference>
<dbReference type="NCBIfam" id="TIGR00449">
    <property type="entry name" value="tgt_general"/>
    <property type="match status" value="1"/>
</dbReference>
<dbReference type="PANTHER" id="PTHR46499">
    <property type="entry name" value="QUEUINE TRNA-RIBOSYLTRANSFERASE"/>
    <property type="match status" value="1"/>
</dbReference>
<dbReference type="PANTHER" id="PTHR46499:SF1">
    <property type="entry name" value="QUEUINE TRNA-RIBOSYLTRANSFERASE"/>
    <property type="match status" value="1"/>
</dbReference>
<dbReference type="Pfam" id="PF01702">
    <property type="entry name" value="TGT"/>
    <property type="match status" value="1"/>
</dbReference>
<dbReference type="SUPFAM" id="SSF88802">
    <property type="entry name" value="Pre-PUA domain"/>
    <property type="match status" value="1"/>
</dbReference>
<dbReference type="SUPFAM" id="SSF51713">
    <property type="entry name" value="tRNA-guanine transglycosylase"/>
    <property type="match status" value="1"/>
</dbReference>
<accession>Q4JAY6</accession>
<name>ATGT_SULAC</name>
<evidence type="ECO:0000255" key="1">
    <source>
        <dbReference type="HAMAP-Rule" id="MF_01634"/>
    </source>
</evidence>
<sequence>MIGDFEIKDEDLAGRIGILETKHGKLETPAFFPVINPVKNEITIQDILSVGFESIITNAFLIKKYIGKEEDLHSILNYNKILMTDSGAYQILQYGDIDVSNVDIVNYETKLKPDIAVILDIPTGLTEDKKEAEKSVESTISRAKEASKFVELSKDEIIWVHPIQGGMYLDLIEYSARIADMNQDYKMLALGSPTVLMQRYEYAPLIDMIYKSKSNVSRGKPFHLFGGGHPHIFAFAVALGVDTFDSASYILYARDHRYMTRERVYRLEELDYFPCSCPICSRYSPKDVMEMPEEQKVRLIALHNLYVIKEEINYIKQSLKEGRLFEYIQQKAYSHPSTFEAFRRILNYSKYLEKYDPRVKGEVKGVFLFDNSSLHRPEVIRHAYTLSKIKQRSKALVLYCSDSKDNPLKNTEDMKNADVYIVLPFYGCVPYNVFFTYPYFQSEMPSTIDKDVIYDLKNKLKEFLSQRSYETVSIIGCEKILHVDSIRGAPVNLLLNKL</sequence>